<protein>
    <recommendedName>
        <fullName evidence="1">Large ribosomal subunit protein bL34</fullName>
    </recommendedName>
    <alternativeName>
        <fullName evidence="2">50S ribosomal protein L34</fullName>
    </alternativeName>
</protein>
<organism>
    <name type="scientific">Acidovorax sp. (strain JS42)</name>
    <dbReference type="NCBI Taxonomy" id="232721"/>
    <lineage>
        <taxon>Bacteria</taxon>
        <taxon>Pseudomonadati</taxon>
        <taxon>Pseudomonadota</taxon>
        <taxon>Betaproteobacteria</taxon>
        <taxon>Burkholderiales</taxon>
        <taxon>Comamonadaceae</taxon>
        <taxon>Acidovorax</taxon>
    </lineage>
</organism>
<proteinExistence type="inferred from homology"/>
<feature type="chain" id="PRO_1000013264" description="Large ribosomal subunit protein bL34">
    <location>
        <begin position="1"/>
        <end position="44"/>
    </location>
</feature>
<evidence type="ECO:0000255" key="1">
    <source>
        <dbReference type="HAMAP-Rule" id="MF_00391"/>
    </source>
</evidence>
<evidence type="ECO:0000305" key="2"/>
<dbReference type="EMBL" id="CP000539">
    <property type="protein sequence ID" value="ABM44244.1"/>
    <property type="molecule type" value="Genomic_DNA"/>
</dbReference>
<dbReference type="SMR" id="A1WDB9"/>
<dbReference type="STRING" id="232721.Ajs_4143"/>
<dbReference type="KEGG" id="ajs:Ajs_4143"/>
<dbReference type="eggNOG" id="COG0230">
    <property type="taxonomic scope" value="Bacteria"/>
</dbReference>
<dbReference type="HOGENOM" id="CLU_129938_2_0_4"/>
<dbReference type="Proteomes" id="UP000000645">
    <property type="component" value="Chromosome"/>
</dbReference>
<dbReference type="GO" id="GO:1990904">
    <property type="term" value="C:ribonucleoprotein complex"/>
    <property type="evidence" value="ECO:0007669"/>
    <property type="project" value="UniProtKB-KW"/>
</dbReference>
<dbReference type="GO" id="GO:0005840">
    <property type="term" value="C:ribosome"/>
    <property type="evidence" value="ECO:0007669"/>
    <property type="project" value="UniProtKB-KW"/>
</dbReference>
<dbReference type="GO" id="GO:0003735">
    <property type="term" value="F:structural constituent of ribosome"/>
    <property type="evidence" value="ECO:0007669"/>
    <property type="project" value="InterPro"/>
</dbReference>
<dbReference type="GO" id="GO:0006412">
    <property type="term" value="P:translation"/>
    <property type="evidence" value="ECO:0007669"/>
    <property type="project" value="UniProtKB-UniRule"/>
</dbReference>
<dbReference type="FunFam" id="1.10.287.3980:FF:000001">
    <property type="entry name" value="Mitochondrial ribosomal protein L34"/>
    <property type="match status" value="1"/>
</dbReference>
<dbReference type="Gene3D" id="1.10.287.3980">
    <property type="match status" value="1"/>
</dbReference>
<dbReference type="HAMAP" id="MF_00391">
    <property type="entry name" value="Ribosomal_bL34"/>
    <property type="match status" value="1"/>
</dbReference>
<dbReference type="InterPro" id="IPR000271">
    <property type="entry name" value="Ribosomal_bL34"/>
</dbReference>
<dbReference type="InterPro" id="IPR020939">
    <property type="entry name" value="Ribosomal_bL34_CS"/>
</dbReference>
<dbReference type="NCBIfam" id="TIGR01030">
    <property type="entry name" value="rpmH_bact"/>
    <property type="match status" value="1"/>
</dbReference>
<dbReference type="PANTHER" id="PTHR14503:SF4">
    <property type="entry name" value="LARGE RIBOSOMAL SUBUNIT PROTEIN BL34M"/>
    <property type="match status" value="1"/>
</dbReference>
<dbReference type="PANTHER" id="PTHR14503">
    <property type="entry name" value="MITOCHONDRIAL RIBOSOMAL PROTEIN 34 FAMILY MEMBER"/>
    <property type="match status" value="1"/>
</dbReference>
<dbReference type="Pfam" id="PF00468">
    <property type="entry name" value="Ribosomal_L34"/>
    <property type="match status" value="1"/>
</dbReference>
<dbReference type="PROSITE" id="PS00784">
    <property type="entry name" value="RIBOSOMAL_L34"/>
    <property type="match status" value="1"/>
</dbReference>
<keyword id="KW-0687">Ribonucleoprotein</keyword>
<keyword id="KW-0689">Ribosomal protein</keyword>
<comment type="similarity">
    <text evidence="1">Belongs to the bacterial ribosomal protein bL34 family.</text>
</comment>
<sequence>MKRTYQPSKTRRARTHGFLVRMKTRGGRAVINARRAKGRKRLAV</sequence>
<gene>
    <name evidence="1" type="primary">rpmH</name>
    <name type="ordered locus">Ajs_4143</name>
</gene>
<name>RL34_ACISJ</name>
<accession>A1WDB9</accession>
<reference key="1">
    <citation type="submission" date="2006-12" db="EMBL/GenBank/DDBJ databases">
        <title>Complete sequence of chromosome 1 of Acidovorax sp. JS42.</title>
        <authorList>
            <person name="Copeland A."/>
            <person name="Lucas S."/>
            <person name="Lapidus A."/>
            <person name="Barry K."/>
            <person name="Detter J.C."/>
            <person name="Glavina del Rio T."/>
            <person name="Dalin E."/>
            <person name="Tice H."/>
            <person name="Pitluck S."/>
            <person name="Chertkov O."/>
            <person name="Brettin T."/>
            <person name="Bruce D."/>
            <person name="Han C."/>
            <person name="Tapia R."/>
            <person name="Gilna P."/>
            <person name="Schmutz J."/>
            <person name="Larimer F."/>
            <person name="Land M."/>
            <person name="Hauser L."/>
            <person name="Kyrpides N."/>
            <person name="Kim E."/>
            <person name="Stahl D."/>
            <person name="Richardson P."/>
        </authorList>
    </citation>
    <scope>NUCLEOTIDE SEQUENCE [LARGE SCALE GENOMIC DNA]</scope>
    <source>
        <strain>JS42</strain>
    </source>
</reference>